<accession>O28484</accession>
<gene>
    <name type="primary">polB</name>
    <name type="ordered locus">AF_1790</name>
</gene>
<protein>
    <recommendedName>
        <fullName>DNA polymerase II small subunit</fullName>
        <shortName>Pol II</shortName>
        <ecNumber>2.7.7.7</ecNumber>
    </recommendedName>
    <alternativeName>
        <fullName>Exodeoxyribonuclease small subunit</fullName>
        <ecNumber>3.1.11.1</ecNumber>
    </alternativeName>
</protein>
<organism>
    <name type="scientific">Archaeoglobus fulgidus (strain ATCC 49558 / DSM 4304 / JCM 9628 / NBRC 100126 / VC-16)</name>
    <dbReference type="NCBI Taxonomy" id="224325"/>
    <lineage>
        <taxon>Archaea</taxon>
        <taxon>Methanobacteriati</taxon>
        <taxon>Methanobacteriota</taxon>
        <taxon>Archaeoglobi</taxon>
        <taxon>Archaeoglobales</taxon>
        <taxon>Archaeoglobaceae</taxon>
        <taxon>Archaeoglobus</taxon>
    </lineage>
</organism>
<proteinExistence type="inferred from homology"/>
<comment type="function">
    <text evidence="1">Possesses two activities: a DNA synthesis (polymerase) and an exonucleolytic activity that degrades single-stranded DNA in the 3' to 5' direction. Has a template-primer preference which is characteristic of a replicative DNA polymerase (By similarity).</text>
</comment>
<comment type="catalytic activity">
    <reaction>
        <text>DNA(n) + a 2'-deoxyribonucleoside 5'-triphosphate = DNA(n+1) + diphosphate</text>
        <dbReference type="Rhea" id="RHEA:22508"/>
        <dbReference type="Rhea" id="RHEA-COMP:17339"/>
        <dbReference type="Rhea" id="RHEA-COMP:17340"/>
        <dbReference type="ChEBI" id="CHEBI:33019"/>
        <dbReference type="ChEBI" id="CHEBI:61560"/>
        <dbReference type="ChEBI" id="CHEBI:173112"/>
        <dbReference type="EC" id="2.7.7.7"/>
    </reaction>
</comment>
<comment type="catalytic activity">
    <reaction>
        <text>Exonucleolytic cleavage in the 3'- to 5'-direction to yield nucleoside 5'-phosphates.</text>
        <dbReference type="EC" id="3.1.11.1"/>
    </reaction>
</comment>
<comment type="subunit">
    <text evidence="1">Heterodimer of a large subunit and a small subunit.</text>
</comment>
<comment type="similarity">
    <text evidence="2">Belongs to the DNA polymerase delta/II small subunit family.</text>
</comment>
<sequence length="488" mass="54586">MVIKNIDAATVAKKFLVRGYNIDPKAAELICKSGLFSDELVDKICRIANGGFIIEKSVVEEFLRNLSNLKPATLTPRPEERKVEEVKASCIALKVIKDITGKSSCQGNVEDFLMYFNSRLEKLSRIIRSRVNTTPIAHAGKVRGNVSVVGMVNEVYERGDKCYIRLEDTTGTITCVATGKNAEVARELLGDEVIGVTGLLKGSSLYANRIVFPDVPINGNGEKKRDFYIVFLSDTHFGSKEFLEKEWEMFVRWLKGEVGGKKSQNLAEKVKYIVIAGDIVDGIGVYPGQEDDLAISDIYGQYEFAASHLDEIPKEIKIIVSPGNHDAVRQAEPQPAFEGEIRSLFPKNVEHVGNPAYVDIEGVKVLIYHGRSIDDIISKIPRLSYDEPQKVMEELLKRRHLSPIYGGRTPLAPEREDYLVIEDVPDILHCGHIHTYGTGFYRGVFMVNSSTWQAQTEFQKKVNLNPMPGNVAVYRPGGEVIRLRFYGE</sequence>
<name>DP2S_ARCFU</name>
<keyword id="KW-0235">DNA replication</keyword>
<keyword id="KW-0238">DNA-binding</keyword>
<keyword id="KW-0239">DNA-directed DNA polymerase</keyword>
<keyword id="KW-0269">Exonuclease</keyword>
<keyword id="KW-0378">Hydrolase</keyword>
<keyword id="KW-0511">Multifunctional enzyme</keyword>
<keyword id="KW-0540">Nuclease</keyword>
<keyword id="KW-0548">Nucleotidyltransferase</keyword>
<keyword id="KW-1185">Reference proteome</keyword>
<keyword id="KW-0808">Transferase</keyword>
<dbReference type="EC" id="2.7.7.7"/>
<dbReference type="EC" id="3.1.11.1"/>
<dbReference type="EMBL" id="AE000782">
    <property type="protein sequence ID" value="AAB89458.1"/>
    <property type="molecule type" value="Genomic_DNA"/>
</dbReference>
<dbReference type="PIR" id="E69473">
    <property type="entry name" value="E69473"/>
</dbReference>
<dbReference type="RefSeq" id="WP_010879286.1">
    <property type="nucleotide sequence ID" value="NC_000917.1"/>
</dbReference>
<dbReference type="SMR" id="O28484"/>
<dbReference type="STRING" id="224325.AF_1790"/>
<dbReference type="PaxDb" id="224325-AF_1790"/>
<dbReference type="DNASU" id="1485013"/>
<dbReference type="EnsemblBacteria" id="AAB89458">
    <property type="protein sequence ID" value="AAB89458"/>
    <property type="gene ID" value="AF_1790"/>
</dbReference>
<dbReference type="KEGG" id="afu:AF_1790"/>
<dbReference type="eggNOG" id="arCOG04455">
    <property type="taxonomic scope" value="Archaea"/>
</dbReference>
<dbReference type="HOGENOM" id="CLU_027850_1_0_2"/>
<dbReference type="OrthoDB" id="372039at2157"/>
<dbReference type="PhylomeDB" id="O28484"/>
<dbReference type="Proteomes" id="UP000002199">
    <property type="component" value="Chromosome"/>
</dbReference>
<dbReference type="GO" id="GO:0042575">
    <property type="term" value="C:DNA polymerase complex"/>
    <property type="evidence" value="ECO:0007669"/>
    <property type="project" value="TreeGrafter"/>
</dbReference>
<dbReference type="GO" id="GO:0003677">
    <property type="term" value="F:DNA binding"/>
    <property type="evidence" value="ECO:0007669"/>
    <property type="project" value="UniProtKB-UniRule"/>
</dbReference>
<dbReference type="GO" id="GO:0003887">
    <property type="term" value="F:DNA-directed DNA polymerase activity"/>
    <property type="evidence" value="ECO:0007669"/>
    <property type="project" value="UniProtKB-UniRule"/>
</dbReference>
<dbReference type="GO" id="GO:0008310">
    <property type="term" value="F:single-stranded DNA 3'-5' DNA exonuclease activity"/>
    <property type="evidence" value="ECO:0007669"/>
    <property type="project" value="UniProtKB-EC"/>
</dbReference>
<dbReference type="GO" id="GO:0006308">
    <property type="term" value="P:DNA catabolic process"/>
    <property type="evidence" value="ECO:0007669"/>
    <property type="project" value="UniProtKB-UniRule"/>
</dbReference>
<dbReference type="GO" id="GO:0006271">
    <property type="term" value="P:DNA strand elongation involved in DNA replication"/>
    <property type="evidence" value="ECO:0007669"/>
    <property type="project" value="TreeGrafter"/>
</dbReference>
<dbReference type="CDD" id="cd07386">
    <property type="entry name" value="MPP_DNA_pol_II_small_archeal_C"/>
    <property type="match status" value="1"/>
</dbReference>
<dbReference type="CDD" id="cd04490">
    <property type="entry name" value="PolII_SU_OBF"/>
    <property type="match status" value="1"/>
</dbReference>
<dbReference type="FunFam" id="3.60.21.50:FF:000003">
    <property type="entry name" value="DNA polymerase II small subunit"/>
    <property type="match status" value="1"/>
</dbReference>
<dbReference type="Gene3D" id="3.60.21.50">
    <property type="match status" value="1"/>
</dbReference>
<dbReference type="HAMAP" id="MF_00325">
    <property type="entry name" value="DNApol_II_A_arch"/>
    <property type="match status" value="1"/>
</dbReference>
<dbReference type="InterPro" id="IPR007185">
    <property type="entry name" value="DNA_pol_a/d/e_bsu"/>
</dbReference>
<dbReference type="InterPro" id="IPR024826">
    <property type="entry name" value="DNA_pol_delta/II_ssu"/>
</dbReference>
<dbReference type="InterPro" id="IPR029052">
    <property type="entry name" value="Metallo-depent_PP-like"/>
</dbReference>
<dbReference type="InterPro" id="IPR004365">
    <property type="entry name" value="NA-bd_OB_tRNA"/>
</dbReference>
<dbReference type="InterPro" id="IPR011149">
    <property type="entry name" value="Pol2_small_arc"/>
</dbReference>
<dbReference type="NCBIfam" id="NF003118">
    <property type="entry name" value="PRK04036.1-3"/>
    <property type="match status" value="1"/>
</dbReference>
<dbReference type="PANTHER" id="PTHR10416">
    <property type="entry name" value="DNA POLYMERASE DELTA SUBUNIT 2"/>
    <property type="match status" value="1"/>
</dbReference>
<dbReference type="PANTHER" id="PTHR10416:SF0">
    <property type="entry name" value="DNA POLYMERASE DELTA SUBUNIT 2"/>
    <property type="match status" value="1"/>
</dbReference>
<dbReference type="Pfam" id="PF04042">
    <property type="entry name" value="DNA_pol_E_B"/>
    <property type="match status" value="1"/>
</dbReference>
<dbReference type="Pfam" id="PF01336">
    <property type="entry name" value="tRNA_anti-codon"/>
    <property type="match status" value="1"/>
</dbReference>
<dbReference type="PIRSF" id="PIRSF000803">
    <property type="entry name" value="Arc_Pol2_small"/>
    <property type="match status" value="1"/>
</dbReference>
<dbReference type="SUPFAM" id="SSF56300">
    <property type="entry name" value="Metallo-dependent phosphatases"/>
    <property type="match status" value="1"/>
</dbReference>
<feature type="chain" id="PRO_0000096175" description="DNA polymerase II small subunit">
    <location>
        <begin position="1"/>
        <end position="488"/>
    </location>
</feature>
<evidence type="ECO:0000250" key="1"/>
<evidence type="ECO:0000305" key="2"/>
<reference key="1">
    <citation type="journal article" date="1997" name="Nature">
        <title>The complete genome sequence of the hyperthermophilic, sulphate-reducing archaeon Archaeoglobus fulgidus.</title>
        <authorList>
            <person name="Klenk H.-P."/>
            <person name="Clayton R.A."/>
            <person name="Tomb J.-F."/>
            <person name="White O."/>
            <person name="Nelson K.E."/>
            <person name="Ketchum K.A."/>
            <person name="Dodson R.J."/>
            <person name="Gwinn M.L."/>
            <person name="Hickey E.K."/>
            <person name="Peterson J.D."/>
            <person name="Richardson D.L."/>
            <person name="Kerlavage A.R."/>
            <person name="Graham D.E."/>
            <person name="Kyrpides N.C."/>
            <person name="Fleischmann R.D."/>
            <person name="Quackenbush J."/>
            <person name="Lee N.H."/>
            <person name="Sutton G.G."/>
            <person name="Gill S.R."/>
            <person name="Kirkness E.F."/>
            <person name="Dougherty B.A."/>
            <person name="McKenney K."/>
            <person name="Adams M.D."/>
            <person name="Loftus B.J."/>
            <person name="Peterson S.N."/>
            <person name="Reich C.I."/>
            <person name="McNeil L.K."/>
            <person name="Badger J.H."/>
            <person name="Glodek A."/>
            <person name="Zhou L."/>
            <person name="Overbeek R."/>
            <person name="Gocayne J.D."/>
            <person name="Weidman J.F."/>
            <person name="McDonald L.A."/>
            <person name="Utterback T.R."/>
            <person name="Cotton M.D."/>
            <person name="Spriggs T."/>
            <person name="Artiach P."/>
            <person name="Kaine B.P."/>
            <person name="Sykes S.M."/>
            <person name="Sadow P.W."/>
            <person name="D'Andrea K.P."/>
            <person name="Bowman C."/>
            <person name="Fujii C."/>
            <person name="Garland S.A."/>
            <person name="Mason T.M."/>
            <person name="Olsen G.J."/>
            <person name="Fraser C.M."/>
            <person name="Smith H.O."/>
            <person name="Woese C.R."/>
            <person name="Venter J.C."/>
        </authorList>
    </citation>
    <scope>NUCLEOTIDE SEQUENCE [LARGE SCALE GENOMIC DNA]</scope>
    <source>
        <strain>ATCC 49558 / DSM 4304 / JCM 9628 / NBRC 100126 / VC-16</strain>
    </source>
</reference>